<keyword id="KW-0002">3D-structure</keyword>
<keyword id="KW-0025">Alternative splicing</keyword>
<keyword id="KW-0963">Cytoplasm</keyword>
<keyword id="KW-0254">Endocytosis</keyword>
<keyword id="KW-0472">Membrane</keyword>
<keyword id="KW-0597">Phosphoprotein</keyword>
<keyword id="KW-1267">Proteomics identification</keyword>
<keyword id="KW-1185">Reference proteome</keyword>
<keyword id="KW-0677">Repeat</keyword>
<keyword id="KW-0770">Synapse</keyword>
<keyword id="KW-0771">Synaptosome</keyword>
<keyword id="KW-0832">Ubl conjugation</keyword>
<dbReference type="EMBL" id="AF380833">
    <property type="protein sequence ID" value="AAK76362.1"/>
    <property type="status" value="ALT_FRAME"/>
    <property type="molecule type" value="mRNA"/>
</dbReference>
<dbReference type="EMBL" id="AF449430">
    <property type="protein sequence ID" value="AAL47008.1"/>
    <property type="molecule type" value="mRNA"/>
</dbReference>
<dbReference type="EMBL" id="AB208948">
    <property type="protein sequence ID" value="BAD92185.1"/>
    <property type="status" value="ALT_INIT"/>
    <property type="molecule type" value="mRNA"/>
</dbReference>
<dbReference type="EMBL" id="AL121769">
    <property type="status" value="NOT_ANNOTATED_CDS"/>
    <property type="molecule type" value="Genomic_DNA"/>
</dbReference>
<dbReference type="EMBL" id="AL136040">
    <property type="status" value="NOT_ANNOTATED_CDS"/>
    <property type="molecule type" value="Genomic_DNA"/>
</dbReference>
<dbReference type="EMBL" id="BC069389">
    <property type="protein sequence ID" value="AAH69389.1"/>
    <property type="molecule type" value="mRNA"/>
</dbReference>
<dbReference type="EMBL" id="BC117493">
    <property type="protein sequence ID" value="AAI17494.1"/>
    <property type="molecule type" value="mRNA"/>
</dbReference>
<dbReference type="EMBL" id="AF255309">
    <property type="protein sequence ID" value="AAK57558.1"/>
    <property type="status" value="ALT_SEQ"/>
    <property type="molecule type" value="mRNA"/>
</dbReference>
<dbReference type="CCDS" id="CCDS58332.1">
    <molecule id="Q8WXE9-3"/>
</dbReference>
<dbReference type="RefSeq" id="NP_001243359.1">
    <molecule id="Q8WXE9-3"/>
    <property type="nucleotide sequence ID" value="NM_001256430.3"/>
</dbReference>
<dbReference type="RefSeq" id="NP_149095.2">
    <property type="nucleotide sequence ID" value="NM_033104.3"/>
</dbReference>
<dbReference type="RefSeq" id="XP_024305504.1">
    <molecule id="Q8WXE9-3"/>
    <property type="nucleotide sequence ID" value="XM_024449736.2"/>
</dbReference>
<dbReference type="RefSeq" id="XP_047287771.1">
    <molecule id="Q8WXE9-3"/>
    <property type="nucleotide sequence ID" value="XM_047431815.1"/>
</dbReference>
<dbReference type="PDB" id="2JXC">
    <property type="method" value="NMR"/>
    <property type="chains" value="B=301-340"/>
</dbReference>
<dbReference type="PDBsum" id="2JXC"/>
<dbReference type="BMRB" id="Q8WXE9"/>
<dbReference type="SMR" id="Q8WXE9"/>
<dbReference type="BioGRID" id="124526">
    <property type="interactions" value="99"/>
</dbReference>
<dbReference type="CORUM" id="Q8WXE9"/>
<dbReference type="ELM" id="Q8WXE9"/>
<dbReference type="FunCoup" id="Q8WXE9">
    <property type="interactions" value="555"/>
</dbReference>
<dbReference type="IntAct" id="Q8WXE9">
    <property type="interactions" value="56"/>
</dbReference>
<dbReference type="MINT" id="Q8WXE9"/>
<dbReference type="STRING" id="9606.ENSP00000450857"/>
<dbReference type="CarbonylDB" id="Q8WXE9"/>
<dbReference type="GlyGen" id="Q8WXE9">
    <property type="glycosylation" value="5 sites, 1 N-linked glycan (1 site), 1 O-linked glycan (4 sites)"/>
</dbReference>
<dbReference type="iPTMnet" id="Q8WXE9"/>
<dbReference type="PhosphoSitePlus" id="Q8WXE9"/>
<dbReference type="BioMuta" id="STON2"/>
<dbReference type="DMDM" id="34098614"/>
<dbReference type="jPOST" id="Q8WXE9"/>
<dbReference type="MassIVE" id="Q8WXE9"/>
<dbReference type="PaxDb" id="9606-ENSP00000450857"/>
<dbReference type="PeptideAtlas" id="Q8WXE9"/>
<dbReference type="ProteomicsDB" id="32734"/>
<dbReference type="ProteomicsDB" id="75021">
    <molecule id="Q8WXE9-1"/>
</dbReference>
<dbReference type="Pumba" id="Q8WXE9"/>
<dbReference type="ABCD" id="Q8WXE9">
    <property type="antibodies" value="1 sequenced antibody"/>
</dbReference>
<dbReference type="Antibodypedia" id="164">
    <property type="antibodies" value="34 antibodies from 15 providers"/>
</dbReference>
<dbReference type="DNASU" id="85439"/>
<dbReference type="Ensembl" id="ENST00000555447.5">
    <molecule id="Q8WXE9-3"/>
    <property type="protein sequence ID" value="ENSP00000450857.1"/>
    <property type="gene ID" value="ENSG00000140022.14"/>
</dbReference>
<dbReference type="GeneID" id="85439"/>
<dbReference type="KEGG" id="hsa:85439"/>
<dbReference type="UCSC" id="uc001xvk.3">
    <molecule id="Q8WXE9-1"/>
    <property type="organism name" value="human"/>
</dbReference>
<dbReference type="AGR" id="HGNC:30652"/>
<dbReference type="CTD" id="85439"/>
<dbReference type="DisGeNET" id="85439"/>
<dbReference type="GeneCards" id="STON2"/>
<dbReference type="HGNC" id="HGNC:30652">
    <property type="gene designation" value="STON2"/>
</dbReference>
<dbReference type="HPA" id="ENSG00000140022">
    <property type="expression patterns" value="Tissue enhanced (brain)"/>
</dbReference>
<dbReference type="MIM" id="608467">
    <property type="type" value="gene"/>
</dbReference>
<dbReference type="neXtProt" id="NX_Q8WXE9"/>
<dbReference type="OpenTargets" id="ENSG00000140022"/>
<dbReference type="PharmGKB" id="PA143485624"/>
<dbReference type="VEuPathDB" id="HostDB:ENSG00000140022"/>
<dbReference type="eggNOG" id="KOG2677">
    <property type="taxonomic scope" value="Eukaryota"/>
</dbReference>
<dbReference type="GeneTree" id="ENSGT00940000159392"/>
<dbReference type="HOGENOM" id="CLU_016541_0_0_1"/>
<dbReference type="InParanoid" id="Q8WXE9"/>
<dbReference type="OMA" id="EWVSFND"/>
<dbReference type="OrthoDB" id="10063141at2759"/>
<dbReference type="PAN-GO" id="Q8WXE9">
    <property type="GO annotations" value="5 GO annotations based on evolutionary models"/>
</dbReference>
<dbReference type="PhylomeDB" id="Q8WXE9"/>
<dbReference type="TreeFam" id="TF300393"/>
<dbReference type="PathwayCommons" id="Q8WXE9"/>
<dbReference type="Reactome" id="R-HSA-8856825">
    <property type="pathway name" value="Cargo recognition for clathrin-mediated endocytosis"/>
</dbReference>
<dbReference type="Reactome" id="R-HSA-8856828">
    <property type="pathway name" value="Clathrin-mediated endocytosis"/>
</dbReference>
<dbReference type="SignaLink" id="Q8WXE9"/>
<dbReference type="SIGNOR" id="Q8WXE9"/>
<dbReference type="BioGRID-ORCS" id="85439">
    <property type="hits" value="11 hits in 1159 CRISPR screens"/>
</dbReference>
<dbReference type="ChiTaRS" id="STON2">
    <property type="organism name" value="human"/>
</dbReference>
<dbReference type="EvolutionaryTrace" id="Q8WXE9"/>
<dbReference type="GenomeRNAi" id="85439"/>
<dbReference type="Pharos" id="Q8WXE9">
    <property type="development level" value="Tbio"/>
</dbReference>
<dbReference type="PRO" id="PR:Q8WXE9"/>
<dbReference type="Proteomes" id="UP000005640">
    <property type="component" value="Chromosome 14"/>
</dbReference>
<dbReference type="RNAct" id="Q8WXE9">
    <property type="molecule type" value="protein"/>
</dbReference>
<dbReference type="Bgee" id="ENSG00000140022">
    <property type="expression patterns" value="Expressed in medial globus pallidus and 172 other cell types or tissues"/>
</dbReference>
<dbReference type="ExpressionAtlas" id="Q8WXE9">
    <property type="expression patterns" value="baseline and differential"/>
</dbReference>
<dbReference type="GO" id="GO:0030122">
    <property type="term" value="C:AP-2 adaptor complex"/>
    <property type="evidence" value="ECO:0000318"/>
    <property type="project" value="GO_Central"/>
</dbReference>
<dbReference type="GO" id="GO:0005829">
    <property type="term" value="C:cytosol"/>
    <property type="evidence" value="ECO:0000314"/>
    <property type="project" value="HPA"/>
</dbReference>
<dbReference type="GO" id="GO:0043005">
    <property type="term" value="C:neuron projection"/>
    <property type="evidence" value="ECO:0007669"/>
    <property type="project" value="UniProtKB-KW"/>
</dbReference>
<dbReference type="GO" id="GO:0005730">
    <property type="term" value="C:nucleolus"/>
    <property type="evidence" value="ECO:0000314"/>
    <property type="project" value="HPA"/>
</dbReference>
<dbReference type="GO" id="GO:0008021">
    <property type="term" value="C:synaptic vesicle"/>
    <property type="evidence" value="ECO:0000318"/>
    <property type="project" value="GO_Central"/>
</dbReference>
<dbReference type="GO" id="GO:0035615">
    <property type="term" value="F:clathrin adaptor activity"/>
    <property type="evidence" value="ECO:0000318"/>
    <property type="project" value="GO_Central"/>
</dbReference>
<dbReference type="GO" id="GO:0072583">
    <property type="term" value="P:clathrin-dependent endocytosis"/>
    <property type="evidence" value="ECO:0000318"/>
    <property type="project" value="GO_Central"/>
</dbReference>
<dbReference type="GO" id="GO:0030100">
    <property type="term" value="P:regulation of endocytosis"/>
    <property type="evidence" value="ECO:0000250"/>
    <property type="project" value="UniProtKB"/>
</dbReference>
<dbReference type="GO" id="GO:0048488">
    <property type="term" value="P:synaptic vesicle endocytosis"/>
    <property type="evidence" value="ECO:0000316"/>
    <property type="project" value="UniProtKB"/>
</dbReference>
<dbReference type="CDD" id="cd09263">
    <property type="entry name" value="AP_stonin-2_MHD"/>
    <property type="match status" value="1"/>
</dbReference>
<dbReference type="DisProt" id="DP01368"/>
<dbReference type="FunFam" id="2.60.40.1170:FF:000012">
    <property type="entry name" value="Stonin 2"/>
    <property type="match status" value="1"/>
</dbReference>
<dbReference type="FunFam" id="2.60.40.1170:FF:000036">
    <property type="entry name" value="stonin-2 isoform X1"/>
    <property type="match status" value="1"/>
</dbReference>
<dbReference type="FunFam" id="2.60.40.1170:FF:000018">
    <property type="entry name" value="stonin-2 isoform X2"/>
    <property type="match status" value="1"/>
</dbReference>
<dbReference type="Gene3D" id="2.60.40.1170">
    <property type="entry name" value="Mu homology domain, subdomain B"/>
    <property type="match status" value="3"/>
</dbReference>
<dbReference type="InterPro" id="IPR050431">
    <property type="entry name" value="Adaptor_comp_med_subunit"/>
</dbReference>
<dbReference type="InterPro" id="IPR036168">
    <property type="entry name" value="AP2_Mu_C_sf"/>
</dbReference>
<dbReference type="InterPro" id="IPR028565">
    <property type="entry name" value="MHD"/>
</dbReference>
<dbReference type="InterPro" id="IPR012320">
    <property type="entry name" value="SHD_dom"/>
</dbReference>
<dbReference type="InterPro" id="IPR031228">
    <property type="entry name" value="STON2_MHD"/>
</dbReference>
<dbReference type="InterPro" id="IPR017110">
    <property type="entry name" value="Stonin"/>
</dbReference>
<dbReference type="InterPro" id="IPR022699">
    <property type="entry name" value="Stonin2_N"/>
</dbReference>
<dbReference type="PANTHER" id="PTHR10529">
    <property type="entry name" value="AP COMPLEX SUBUNIT MU"/>
    <property type="match status" value="1"/>
</dbReference>
<dbReference type="Pfam" id="PF00928">
    <property type="entry name" value="Adap_comp_sub"/>
    <property type="match status" value="1"/>
</dbReference>
<dbReference type="Pfam" id="PF12016">
    <property type="entry name" value="Stonin2_N"/>
    <property type="match status" value="1"/>
</dbReference>
<dbReference type="PIRSF" id="PIRSF037099">
    <property type="entry name" value="Stonin"/>
    <property type="match status" value="1"/>
</dbReference>
<dbReference type="SUPFAM" id="SSF49447">
    <property type="entry name" value="Second domain of Mu2 adaptin subunit (ap50) of ap2 adaptor"/>
    <property type="match status" value="1"/>
</dbReference>
<dbReference type="PROSITE" id="PS51072">
    <property type="entry name" value="MHD"/>
    <property type="match status" value="1"/>
</dbReference>
<dbReference type="PROSITE" id="PS51070">
    <property type="entry name" value="SHD"/>
    <property type="match status" value="1"/>
</dbReference>
<evidence type="ECO:0000250" key="1"/>
<evidence type="ECO:0000250" key="2">
    <source>
        <dbReference type="UniProtKB" id="Q8BZ60"/>
    </source>
</evidence>
<evidence type="ECO:0000255" key="3">
    <source>
        <dbReference type="PROSITE-ProRule" id="PRU00403"/>
    </source>
</evidence>
<evidence type="ECO:0000255" key="4">
    <source>
        <dbReference type="PROSITE-ProRule" id="PRU00404"/>
    </source>
</evidence>
<evidence type="ECO:0000256" key="5">
    <source>
        <dbReference type="SAM" id="MobiDB-lite"/>
    </source>
</evidence>
<evidence type="ECO:0000269" key="6">
    <source>
    </source>
</evidence>
<evidence type="ECO:0000269" key="7">
    <source>
    </source>
</evidence>
<evidence type="ECO:0000269" key="8">
    <source>
    </source>
</evidence>
<evidence type="ECO:0000269" key="9">
    <source>
    </source>
</evidence>
<evidence type="ECO:0000269" key="10">
    <source>
    </source>
</evidence>
<evidence type="ECO:0000269" key="11">
    <source ref="3"/>
</evidence>
<evidence type="ECO:0000303" key="12">
    <source ref="3"/>
</evidence>
<evidence type="ECO:0000305" key="13"/>
<evidence type="ECO:0007744" key="14">
    <source>
    </source>
</evidence>
<evidence type="ECO:0007829" key="15">
    <source>
        <dbReference type="PDB" id="2JXC"/>
    </source>
</evidence>
<protein>
    <recommendedName>
        <fullName>Stonin-2</fullName>
    </recommendedName>
    <alternativeName>
        <fullName>Stoned B</fullName>
    </alternativeName>
</protein>
<sequence length="905" mass="101165">MTTLDHVIATHQSEWVSFNEEPPFPAHSQGGTEEHLPGLSSSPDQSESSSGENHVVDGGSQDHSHSEQDDSSEKMGLISEAASPPGSPEQPPPDLASAISNWVQFEDDTPWASTSPPHQETAETALPLTMPCWTCPSFDSLGRCPLTSESSWTTHSEDTSSPSFGCSYTDLQLINAEEQTSGQASGADSTDNSSSLQEDEEVEMEAISWQASSPAMNGHPAPPVTSARFPSWVTFDDNEVSCPLPPVTSPLKPNTPPSASVIPDVPYNSMGSFKKRDRPKSTLMNFSKVQKLDISSLNRTPSVTEASPWRATNPFLNETLQDVQPSPINPFSAFFEEQERRSQNSSISSTTGKSQRDSLIVIYQDAISFDDSSKTQSHSDAVEKLKQLQIDDPDHFGSATLPDDDPVAWIELDAHPPGSARSQPRDGWPMMLRIPEKKNIMSSRHWGPIFVKLTDTGYLQLYYEQGLEKPFREFKLEICHEISEPRLQNYDENGRIHSLRIDRVTYKEKKKYQPKPAVAHTAEREQVIKLGTTNYDDFLSFIHAVQDRLMDLPVLSMDLSTVGLNYLEEEITVDVRDEFSGIVSKGDNQILQHHVLTRIHILSFLSGLAECRLGLNDILVKGNEIVLRQDIMPTTTTKWIKLHECRFHGCVDEDVFHNSRVILFNPLDACRFELMRFRTVFAEKTLPFTLRTATSVNGAEVEVQSWLRMSTGFSANRDPLTQVPCENVMIRYPVPSEWVKNFRRESVLGEKSLKAKVNRGASFGSTSVSGSEPVMRVTLGTAKYEHAFNSIVWRINRLPDKNSASGHPHCFFCHLELGSDREVPSRFANHVNVEFSMPTTSASKASVRSISVEDKTDVRKWVNYSAHYSYQVALGSIWLMLPTPFVHPTTLPLLFLLAMLTMFAW</sequence>
<name>STON2_HUMAN</name>
<feature type="chain" id="PRO_0000185732" description="Stonin-2">
    <location>
        <begin position="1"/>
        <end position="905"/>
    </location>
</feature>
<feature type="domain" description="SHD" evidence="3">
    <location>
        <begin position="427"/>
        <end position="560"/>
    </location>
</feature>
<feature type="domain" description="MHD" evidence="4">
    <location>
        <begin position="568"/>
        <end position="878"/>
    </location>
</feature>
<feature type="region of interest" description="Disordered" evidence="5">
    <location>
        <begin position="1"/>
        <end position="121"/>
    </location>
</feature>
<feature type="region of interest" description="Disordered" evidence="5">
    <location>
        <begin position="178"/>
        <end position="205"/>
    </location>
</feature>
<feature type="region of interest" description="Disordered" evidence="5">
    <location>
        <begin position="244"/>
        <end position="263"/>
    </location>
</feature>
<feature type="short sequence motif" description="NPF 1">
    <location>
        <begin position="313"/>
        <end position="315"/>
    </location>
</feature>
<feature type="short sequence motif" description="NPF 2">
    <location>
        <begin position="329"/>
        <end position="331"/>
    </location>
</feature>
<feature type="compositionally biased region" description="Low complexity" evidence="5">
    <location>
        <begin position="40"/>
        <end position="50"/>
    </location>
</feature>
<feature type="compositionally biased region" description="Basic and acidic residues" evidence="5">
    <location>
        <begin position="60"/>
        <end position="73"/>
    </location>
</feature>
<feature type="compositionally biased region" description="Pro residues" evidence="5">
    <location>
        <begin position="85"/>
        <end position="94"/>
    </location>
</feature>
<feature type="compositionally biased region" description="Polar residues" evidence="5">
    <location>
        <begin position="178"/>
        <end position="196"/>
    </location>
</feature>
<feature type="compositionally biased region" description="Pro residues" evidence="5">
    <location>
        <begin position="244"/>
        <end position="256"/>
    </location>
</feature>
<feature type="modified residue" description="Phosphothreonine" evidence="2">
    <location>
        <position position="255"/>
    </location>
</feature>
<feature type="modified residue" description="Phosphoserine" evidence="14">
    <location>
        <position position="281"/>
    </location>
</feature>
<feature type="modified residue" description="Phosphoserine" evidence="14">
    <location>
        <position position="287"/>
    </location>
</feature>
<feature type="modified residue" description="Phosphoserine" evidence="14">
    <location>
        <position position="302"/>
    </location>
</feature>
<feature type="modified residue" description="Phosphoserine" evidence="14">
    <location>
        <position position="762"/>
    </location>
</feature>
<feature type="splice variant" id="VSP_044863" description="In isoform 2." evidence="12">
    <original>VALGSIWLMLPTPFVHPTTLPLLFLLAMLTMFAW</original>
    <variation>TTETDNLPNPLYCSCLPHTDLKRGSKRVVKIRWNASLEVPLASSIRTMV</variation>
    <location>
        <begin position="872"/>
        <end position="905"/>
    </location>
</feature>
<feature type="sequence variant" id="VAR_020182" description="In dbSNP:rs3813535." evidence="7 8 11">
    <original>S</original>
    <variation>P</variation>
    <location>
        <position position="307"/>
    </location>
</feature>
<feature type="sequence variant" id="VAR_046643" description="In dbSNP:rs34323725.">
    <original>R</original>
    <variation>H</variation>
    <location>
        <position position="646"/>
    </location>
</feature>
<feature type="sequence variant" id="VAR_046644" description="In dbSNP:rs35689202.">
    <original>T</original>
    <variation>A</variation>
    <location>
        <position position="694"/>
    </location>
</feature>
<feature type="sequence variant" id="VAR_021912" description="In dbSNP:rs2241621.">
    <original>S</original>
    <variation>A</variation>
    <location>
        <position position="851"/>
    </location>
</feature>
<feature type="mutagenesis site" description="Reduces interaction with SYT1." evidence="7">
    <original>W</original>
    <variation>A</variation>
    <location>
        <position position="738"/>
    </location>
</feature>
<feature type="mutagenesis site" description="Reduces interaction with SYT1." evidence="7">
    <original>K</original>
    <variation>A</variation>
    <location>
        <position position="740"/>
    </location>
</feature>
<feature type="sequence conflict" description="In Ref. 1; AAK76362." evidence="13" ref="1">
    <original>TA</original>
    <variation>NS</variation>
    <location>
        <begin position="121"/>
        <end position="122"/>
    </location>
</feature>
<feature type="strand" evidence="15">
    <location>
        <begin position="314"/>
        <end position="317"/>
    </location>
</feature>
<feature type="turn" evidence="15">
    <location>
        <begin position="318"/>
        <end position="320"/>
    </location>
</feature>
<feature type="helix" evidence="15">
    <location>
        <begin position="334"/>
        <end position="337"/>
    </location>
</feature>
<feature type="sequence conflict" description="In Ref. 3; BAD92185." evidence="13" ref="3">
    <original>V</original>
    <variation>L</variation>
    <location sequence="Q8WXE9-3">
        <position position="899"/>
    </location>
</feature>
<reference key="1">
    <citation type="journal article" date="2001" name="EMBO Rep.">
        <title>Human stoned B interacts with AP-2 and synaptotagmin and facilitates clathrin-coated vesicle uncoating.</title>
        <authorList>
            <person name="Walther K."/>
            <person name="Krauss M."/>
            <person name="Diril M.K."/>
            <person name="Lemke S."/>
            <person name="Ricotta D."/>
            <person name="Hoening S."/>
            <person name="Kaiser S."/>
            <person name="Haucke V."/>
        </authorList>
    </citation>
    <scope>NUCLEOTIDE SEQUENCE [MRNA] (ISOFORM 1)</scope>
    <scope>FUNCTION</scope>
    <scope>INTERACTION WITH SYT1 AND WITH THE AP-2 COMPLEX</scope>
    <scope>MUTAGENESIS OF TRP-738 AND LYS-740</scope>
    <scope>VARIANT PRO-307</scope>
    <source>
        <tissue>Brain</tissue>
    </source>
</reference>
<reference key="2">
    <citation type="journal article" date="2002" name="EMBO Rep.">
        <authorList>
            <person name="Walther K."/>
            <person name="Krauss M."/>
            <person name="Diril M.K."/>
            <person name="Lemke S."/>
            <person name="Ricotta D."/>
            <person name="Hoening S."/>
            <person name="Kaiser S."/>
            <person name="Haucke V."/>
        </authorList>
    </citation>
    <scope>ERRATUM OF PUBMED:11454741</scope>
</reference>
<reference key="3">
    <citation type="submission" date="2005-03" db="EMBL/GenBank/DDBJ databases">
        <title>Homo sapiens protein coding cDNA.</title>
        <authorList>
            <person name="Totoki Y."/>
            <person name="Toyoda A."/>
            <person name="Takeda T."/>
            <person name="Sakaki Y."/>
            <person name="Tanaka A."/>
            <person name="Yokoyama S."/>
            <person name="Ohara O."/>
            <person name="Nagase T."/>
            <person name="Kikuno R.F."/>
        </authorList>
    </citation>
    <scope>NUCLEOTIDE SEQUENCE [LARGE SCALE MRNA] (ISOFORM 2)</scope>
    <scope>VARIANT PRO-307</scope>
    <source>
        <tissue>Spleen</tissue>
    </source>
</reference>
<reference key="4">
    <citation type="journal article" date="2003" name="Nature">
        <title>The DNA sequence and analysis of human chromosome 14.</title>
        <authorList>
            <person name="Heilig R."/>
            <person name="Eckenberg R."/>
            <person name="Petit J.-L."/>
            <person name="Fonknechten N."/>
            <person name="Da Silva C."/>
            <person name="Cattolico L."/>
            <person name="Levy M."/>
            <person name="Barbe V."/>
            <person name="De Berardinis V."/>
            <person name="Ureta-Vidal A."/>
            <person name="Pelletier E."/>
            <person name="Vico V."/>
            <person name="Anthouard V."/>
            <person name="Rowen L."/>
            <person name="Madan A."/>
            <person name="Qin S."/>
            <person name="Sun H."/>
            <person name="Du H."/>
            <person name="Pepin K."/>
            <person name="Artiguenave F."/>
            <person name="Robert C."/>
            <person name="Cruaud C."/>
            <person name="Bruels T."/>
            <person name="Jaillon O."/>
            <person name="Friedlander L."/>
            <person name="Samson G."/>
            <person name="Brottier P."/>
            <person name="Cure S."/>
            <person name="Segurens B."/>
            <person name="Aniere F."/>
            <person name="Samain S."/>
            <person name="Crespeau H."/>
            <person name="Abbasi N."/>
            <person name="Aiach N."/>
            <person name="Boscus D."/>
            <person name="Dickhoff R."/>
            <person name="Dors M."/>
            <person name="Dubois I."/>
            <person name="Friedman C."/>
            <person name="Gouyvenoux M."/>
            <person name="James R."/>
            <person name="Madan A."/>
            <person name="Mairey-Estrada B."/>
            <person name="Mangenot S."/>
            <person name="Martins N."/>
            <person name="Menard M."/>
            <person name="Oztas S."/>
            <person name="Ratcliffe A."/>
            <person name="Shaffer T."/>
            <person name="Trask B."/>
            <person name="Vacherie B."/>
            <person name="Bellemere C."/>
            <person name="Belser C."/>
            <person name="Besnard-Gonnet M."/>
            <person name="Bartol-Mavel D."/>
            <person name="Boutard M."/>
            <person name="Briez-Silla S."/>
            <person name="Combette S."/>
            <person name="Dufosse-Laurent V."/>
            <person name="Ferron C."/>
            <person name="Lechaplais C."/>
            <person name="Louesse C."/>
            <person name="Muselet D."/>
            <person name="Magdelenat G."/>
            <person name="Pateau E."/>
            <person name="Petit E."/>
            <person name="Sirvain-Trukniewicz P."/>
            <person name="Trybou A."/>
            <person name="Vega-Czarny N."/>
            <person name="Bataille E."/>
            <person name="Bluet E."/>
            <person name="Bordelais I."/>
            <person name="Dubois M."/>
            <person name="Dumont C."/>
            <person name="Guerin T."/>
            <person name="Haffray S."/>
            <person name="Hammadi R."/>
            <person name="Muanga J."/>
            <person name="Pellouin V."/>
            <person name="Robert D."/>
            <person name="Wunderle E."/>
            <person name="Gauguet G."/>
            <person name="Roy A."/>
            <person name="Sainte-Marthe L."/>
            <person name="Verdier J."/>
            <person name="Verdier-Discala C."/>
            <person name="Hillier L.W."/>
            <person name="Fulton L."/>
            <person name="McPherson J."/>
            <person name="Matsuda F."/>
            <person name="Wilson R."/>
            <person name="Scarpelli C."/>
            <person name="Gyapay G."/>
            <person name="Wincker P."/>
            <person name="Saurin W."/>
            <person name="Quetier F."/>
            <person name="Waterston R."/>
            <person name="Hood L."/>
            <person name="Weissenbach J."/>
        </authorList>
    </citation>
    <scope>NUCLEOTIDE SEQUENCE [LARGE SCALE GENOMIC DNA]</scope>
</reference>
<reference key="5">
    <citation type="journal article" date="2004" name="Genome Res.">
        <title>The status, quality, and expansion of the NIH full-length cDNA project: the Mammalian Gene Collection (MGC).</title>
        <authorList>
            <consortium name="The MGC Project Team"/>
        </authorList>
    </citation>
    <scope>NUCLEOTIDE SEQUENCE [LARGE SCALE MRNA] (ISOFORM 1)</scope>
    <scope>VARIANT PRO-307</scope>
    <source>
        <tissue>Brain</tissue>
    </source>
</reference>
<reference key="6">
    <citation type="journal article" date="2001" name="J. Cell Biol.">
        <title>Stonin 2: an adaptor-like protein that interacts with components of the endocytic machinery.</title>
        <authorList>
            <person name="Martina J.A."/>
            <person name="Bonangelino C.J."/>
            <person name="Aguilar R.C."/>
            <person name="Bonifacino J.S."/>
        </authorList>
    </citation>
    <scope>NUCLEOTIDE SEQUENCE [MRNA] OF 191-905 (ISOFORM 1)</scope>
    <scope>FUNCTION</scope>
    <scope>SUBCELLULAR LOCATION</scope>
    <scope>TISSUE SPECIFICITY</scope>
    <scope>INTERACTION WITH EPS15; EPS15R; ITSN1; SYT1 AND SYT2</scope>
</reference>
<reference key="7">
    <citation type="journal article" date="2011" name="BMC Syst. Biol.">
        <title>Initial characterization of the human central proteome.</title>
        <authorList>
            <person name="Burkard T.R."/>
            <person name="Planyavsky M."/>
            <person name="Kaupe I."/>
            <person name="Breitwieser F.P."/>
            <person name="Buerckstuemmer T."/>
            <person name="Bennett K.L."/>
            <person name="Superti-Furga G."/>
            <person name="Colinge J."/>
        </authorList>
    </citation>
    <scope>IDENTIFICATION BY MASS SPECTROMETRY [LARGE SCALE ANALYSIS]</scope>
</reference>
<reference key="8">
    <citation type="journal article" date="2011" name="EMBO J.">
        <title>CSN complex controls the stability of selected synaptic proteins via a torsinA-dependent process.</title>
        <authorList>
            <person name="Granata A."/>
            <person name="Koo S.J."/>
            <person name="Haucke V."/>
            <person name="Schiavo G."/>
            <person name="Warner T.T."/>
        </authorList>
    </citation>
    <scope>FUNCTION IN SYNAPTIC VESICLE RECYCLING</scope>
    <scope>INTERACTION WITH TOR1A AND COPS4</scope>
    <scope>PHOSPHORYLATION</scope>
    <scope>NEDDYLATION</scope>
    <scope>UBIQUITINATION</scope>
</reference>
<reference key="9">
    <citation type="journal article" date="2013" name="J. Proteome Res.">
        <title>Toward a comprehensive characterization of a human cancer cell phosphoproteome.</title>
        <authorList>
            <person name="Zhou H."/>
            <person name="Di Palma S."/>
            <person name="Preisinger C."/>
            <person name="Peng M."/>
            <person name="Polat A.N."/>
            <person name="Heck A.J."/>
            <person name="Mohammed S."/>
        </authorList>
    </citation>
    <scope>PHOSPHORYLATION [LARGE SCALE ANALYSIS] AT SER-281; SER-287; SER-302 AND SER-762</scope>
    <scope>IDENTIFICATION BY MASS SPECTROMETRY [LARGE SCALE ANALYSIS]</scope>
    <source>
        <tissue>Cervix carcinoma</tissue>
        <tissue>Erythroleukemia</tissue>
    </source>
</reference>
<reference key="10">
    <citation type="journal article" date="2008" name="EMBO J.">
        <title>Structure of the Eps15-stonin2 complex provides a molecular explanation for EH-domain ligand specificity.</title>
        <authorList>
            <person name="Rumpf J."/>
            <person name="Simon B."/>
            <person name="Jung N."/>
            <person name="Maritzen T."/>
            <person name="Haucke V."/>
            <person name="Sattler M."/>
            <person name="Groemping Y."/>
        </authorList>
    </citation>
    <scope>STRUCTURE BY NMR OF 121-215 IN COMPLEX WITH EPS15</scope>
</reference>
<organism>
    <name type="scientific">Homo sapiens</name>
    <name type="common">Human</name>
    <dbReference type="NCBI Taxonomy" id="9606"/>
    <lineage>
        <taxon>Eukaryota</taxon>
        <taxon>Metazoa</taxon>
        <taxon>Chordata</taxon>
        <taxon>Craniata</taxon>
        <taxon>Vertebrata</taxon>
        <taxon>Euteleostomi</taxon>
        <taxon>Mammalia</taxon>
        <taxon>Eutheria</taxon>
        <taxon>Euarchontoglires</taxon>
        <taxon>Primates</taxon>
        <taxon>Haplorrhini</taxon>
        <taxon>Catarrhini</taxon>
        <taxon>Hominidae</taxon>
        <taxon>Homo</taxon>
    </lineage>
</organism>
<proteinExistence type="evidence at protein level"/>
<accession>Q8WXE9</accession>
<accession>G3V2T7</accession>
<accession>Q17R24</accession>
<accession>Q59H11</accession>
<accession>Q6NT47</accession>
<accession>Q96RI7</accession>
<accession>Q96RU6</accession>
<comment type="function">
    <text evidence="6 7 10">Adapter protein involved in endocytic machinery. Involved in the synaptic vesicle recycling. May facilitate clathrin-coated vesicle uncoating.</text>
</comment>
<comment type="subunit">
    <text evidence="6 7 9 10">Interacts with the second C2 domain of synaptotagmins SYT1 and SYT2. Interacts with EPS15, EPS15R and ITSN1. Interacts indirectly with the AP-2 adapter complex. Interacts with TOR1A and COPS4; the interaction controls STON2 protein stability.</text>
</comment>
<comment type="interaction">
    <interactant intactId="EBI-539742">
        <id>Q8WXE9</id>
    </interactant>
    <interactant intactId="EBI-396684">
        <id>P42566</id>
        <label>EPS15</label>
    </interactant>
    <organismsDiffer>false</organismsDiffer>
    <experiments>19</experiments>
</comment>
<comment type="interaction">
    <interactant intactId="EBI-539742">
        <id>Q8WXE9</id>
    </interactant>
    <interactant intactId="EBI-2556746">
        <id>Q9UBC2</id>
        <label>EPS15L1</label>
    </interactant>
    <organismsDiffer>false</organismsDiffer>
    <experiments>2</experiments>
</comment>
<comment type="interaction">
    <interactant intactId="EBI-539742">
        <id>Q8WXE9</id>
    </interactant>
    <interactant intactId="EBI-716247">
        <id>Q15843</id>
        <label>NEDD8</label>
    </interactant>
    <organismsDiffer>false</organismsDiffer>
    <experiments>2</experiments>
</comment>
<comment type="interaction">
    <interactant intactId="EBI-539742">
        <id>Q8WXE9</id>
    </interactant>
    <interactant intactId="EBI-458098">
        <id>P21707</id>
        <label>Syt1</label>
    </interactant>
    <organismsDiffer>true</organismsDiffer>
    <experiments>2</experiments>
</comment>
<comment type="subcellular location">
    <subcellularLocation>
        <location evidence="6">Cytoplasm</location>
    </subcellularLocation>
    <subcellularLocation>
        <location evidence="6">Membrane</location>
    </subcellularLocation>
    <subcellularLocation>
        <location evidence="1">Synapse</location>
        <location evidence="1">Synaptosome</location>
    </subcellularLocation>
    <text>Some fraction is membrane-associated.</text>
</comment>
<comment type="alternative products">
    <event type="alternative splicing"/>
    <isoform>
        <id>Q8WXE9-1</id>
        <name>1</name>
        <sequence type="displayed"/>
    </isoform>
    <isoform>
        <id>Q8WXE9-3</id>
        <name>2</name>
        <sequence type="described" ref="VSP_044863"/>
    </isoform>
</comment>
<comment type="tissue specificity">
    <text evidence="6">Ubiquitous.</text>
</comment>
<comment type="domain">
    <text>The Asn-Pro-Phe (NPF) motifs, which are found in proteins involved in the endocytic pathway, mediate the interaction with the EH domain of SYT1, SYT2, EPS15, EPS15R and ITSN1.</text>
</comment>
<comment type="PTM">
    <text evidence="10">Phosphorylated in vitro by PKD.</text>
</comment>
<comment type="PTM">
    <text evidence="10">Neddylated; deneddylated via its interaction with the COP9 signalosome (CSN) complex through TOR1A and COPS4.</text>
</comment>
<comment type="PTM">
    <text evidence="10">Ubiquitinated; leading to its degradation.</text>
</comment>
<comment type="similarity">
    <text evidence="13">Belongs to the Stoned B family.</text>
</comment>
<comment type="sequence caution" evidence="13">
    <conflict type="erroneous initiation">
        <sequence resource="EMBL-CDS" id="AAK57558"/>
    </conflict>
    <text>Truncated N-terminus.</text>
</comment>
<comment type="sequence caution" evidence="13">
    <conflict type="miscellaneous discrepancy">
        <sequence resource="EMBL-CDS" id="AAK57558"/>
    </conflict>
    <text>Intron retention.</text>
</comment>
<comment type="sequence caution" evidence="13">
    <conflict type="frameshift">
        <sequence resource="EMBL-CDS" id="AAK76362"/>
    </conflict>
</comment>
<comment type="sequence caution" evidence="13">
    <conflict type="erroneous initiation">
        <sequence resource="EMBL-CDS" id="BAD92185"/>
    </conflict>
    <text>Extended N-terminus.</text>
</comment>
<gene>
    <name type="primary">STON2</name>
    <name type="synonym">STN2</name>
    <name type="synonym">STNB</name>
</gene>